<organism>
    <name type="scientific">Mus musculus</name>
    <name type="common">Mouse</name>
    <dbReference type="NCBI Taxonomy" id="10090"/>
    <lineage>
        <taxon>Eukaryota</taxon>
        <taxon>Metazoa</taxon>
        <taxon>Chordata</taxon>
        <taxon>Craniata</taxon>
        <taxon>Vertebrata</taxon>
        <taxon>Euteleostomi</taxon>
        <taxon>Mammalia</taxon>
        <taxon>Eutheria</taxon>
        <taxon>Euarchontoglires</taxon>
        <taxon>Glires</taxon>
        <taxon>Rodentia</taxon>
        <taxon>Myomorpha</taxon>
        <taxon>Muroidea</taxon>
        <taxon>Muridae</taxon>
        <taxon>Murinae</taxon>
        <taxon>Mus</taxon>
        <taxon>Mus</taxon>
    </lineage>
</organism>
<sequence>MNNQDAVASILHECKQVLDRLLLETPDVSTEDKSEDQRCRASLPSELRTLIQEAEEMKWPFVPEKWQYKQAMSPEDKTNLQDVIGAGLQQLLAALRASILVQDCAAASAIVFLMDRFLYGLDVSGKLLQVAKGLHKLKPATPIAPQVVIRQARVSVNSGKLLKAEYILSSLISNNGATGTWLYRNESDKVLVQSVCIQIRGQILQKLGMWYEAAELIWASVIGYLTLPQPDKKGISTSLGILADIFVSMSKTDYEKFKKSPKVNLALLKEFDHHLLSAAEACKLAAAFSAYTPLFVLRAVNIRGTCLLSYSCSADCPPGMKSVHLCEAKEAFEIGLLTKKDGELVSGKQELHSFIKAAFGLTTVHSRLHGETDAVRAARQLCSEAVGKLYTFSTSPTSQDREGLSQEIMSLISQVKGHLRVQSFPNLDVCSYVPESFKCGLDRLILHGHVDFQQILETYSQHHTSVCEVFESTCGNSKSNQRDTKSEVCITTLKTETNTADTMVATLERVSSQDSRSTASSKMSKKDQGKLQRERGRSWTRSKAFRVSLDLDMETETEPPNHSNGGTDVFNKSLRDNSSSCSWGRLSGLSSSTSWEEVNCAVQDVVRKGSGQEKHPVEAQSSEAVSEEPKRNRSSRAVFLSSKLRGVSLQTTGDDNLESSPSQLHNHTSILPFNAKDTCLASGAGLVETAEGSNNTSLQSSHSCGSDSWSLSSSDRFTDVTTNPSVQEEEPSGIMGDVPESKYDFKDWHGEKNGGTLTEICTGPELTFAPSSVDPEGETAESTDDGLSPSQVALGCLEGSHSMSTRRTFFPDGSVQNADSAKTGCSVRDQTVDPDASTVDEEGQMLDSTEVCSIGQDGAHRPRALRSGQSAEGPKSFVNGSRPSPIFDEDFSTTEEGEELGSMLKSSQNSSSYSPWWLKSPAFSRSSSDGESSWSLLNSSRSSFASLAGQTSQEILEARTLQPDDLEKLLAGVRHDWLLQRLENTGVLKSNQLQQAHSALLLKYSKKSELWTAQETVVYLGDYLKVKKKGKQRNAFWVHYLHQEETLGRYVGKEYKERKGLRHHFTDVERQMTAQHYVTEFNKRLYEQKIPTQIFYVPSTILLILEDRTIKGCISVEPYILGEFVKLSNNTKVVKNEYKATEYGLAYGHFSYEFSNHRDVVVDLQGWVTGNGKGLIYLTDPQIHSVDQKDVTTNFGKRGIFYFFNNQHASCNEICHRLSLTRPSLEQTSKV</sequence>
<proteinExistence type="evidence at transcript level"/>
<accession>Q9CXB8</accession>
<accession>Q69ZH5</accession>
<accession>Q8BLT9</accession>
<feature type="chain" id="PRO_0000260029" description="Alpha-protein kinase 1">
    <location>
        <begin position="1"/>
        <end position="1231"/>
    </location>
</feature>
<feature type="domain" description="Alpha-type protein kinase" evidence="2">
    <location>
        <begin position="1003"/>
        <end position="1223"/>
    </location>
</feature>
<feature type="region of interest" description="Disordered" evidence="3">
    <location>
        <begin position="508"/>
        <end position="540"/>
    </location>
</feature>
<feature type="region of interest" description="Disordered" evidence="3">
    <location>
        <begin position="609"/>
        <end position="637"/>
    </location>
</feature>
<feature type="region of interest" description="Disordered" evidence="3">
    <location>
        <begin position="692"/>
        <end position="739"/>
    </location>
</feature>
<feature type="region of interest" description="Disordered" evidence="3">
    <location>
        <begin position="767"/>
        <end position="791"/>
    </location>
</feature>
<feature type="region of interest" description="Disordered" evidence="3">
    <location>
        <begin position="811"/>
        <end position="843"/>
    </location>
</feature>
<feature type="region of interest" description="Disordered" evidence="3">
    <location>
        <begin position="859"/>
        <end position="888"/>
    </location>
</feature>
<feature type="compositionally biased region" description="Polar residues" evidence="3">
    <location>
        <begin position="509"/>
        <end position="522"/>
    </location>
</feature>
<feature type="compositionally biased region" description="Basic and acidic residues" evidence="3">
    <location>
        <begin position="524"/>
        <end position="537"/>
    </location>
</feature>
<feature type="compositionally biased region" description="Low complexity" evidence="3">
    <location>
        <begin position="700"/>
        <end position="714"/>
    </location>
</feature>
<feature type="compositionally biased region" description="Acidic residues" evidence="3">
    <location>
        <begin position="775"/>
        <end position="784"/>
    </location>
</feature>
<feature type="binding site" evidence="1">
    <location>
        <position position="61"/>
    </location>
    <ligand>
        <name>ADP-D-glycero-beta-D-manno-heptose</name>
        <dbReference type="ChEBI" id="CHEBI:59967"/>
    </ligand>
</feature>
<feature type="binding site" evidence="1">
    <location>
        <position position="67"/>
    </location>
    <ligand>
        <name>ADP-D-glycero-beta-D-manno-heptose</name>
        <dbReference type="ChEBI" id="CHEBI:59967"/>
    </ligand>
</feature>
<feature type="binding site" evidence="1">
    <location>
        <position position="116"/>
    </location>
    <ligand>
        <name>ADP-D-glycero-beta-D-manno-heptose</name>
        <dbReference type="ChEBI" id="CHEBI:59967"/>
    </ligand>
</feature>
<feature type="binding site" evidence="1">
    <location>
        <begin position="150"/>
        <end position="153"/>
    </location>
    <ligand>
        <name>ADP-D-glycero-beta-D-manno-heptose</name>
        <dbReference type="ChEBI" id="CHEBI:59967"/>
    </ligand>
</feature>
<feature type="binding site" evidence="1">
    <location>
        <position position="231"/>
    </location>
    <ligand>
        <name>ADP-D-glycero-beta-D-manno-heptose</name>
        <dbReference type="ChEBI" id="CHEBI:59967"/>
    </ligand>
</feature>
<feature type="binding site" evidence="1">
    <location>
        <position position="233"/>
    </location>
    <ligand>
        <name>ADP-D-glycero-beta-D-manno-heptose</name>
        <dbReference type="ChEBI" id="CHEBI:59967"/>
    </ligand>
</feature>
<feature type="binding site" evidence="1">
    <location>
        <begin position="236"/>
        <end position="237"/>
    </location>
    <ligand>
        <name>ADP-D-glycero-beta-D-manno-heptose</name>
        <dbReference type="ChEBI" id="CHEBI:59967"/>
    </ligand>
</feature>
<feature type="binding site" evidence="1">
    <location>
        <position position="295"/>
    </location>
    <ligand>
        <name>ADP-D-glycero-beta-D-manno-heptose</name>
        <dbReference type="ChEBI" id="CHEBI:59967"/>
    </ligand>
</feature>
<feature type="sequence conflict" description="In Ref. 2; BAC30902." evidence="8" ref="2">
    <original>AALRASILVQDCAAASAI</original>
    <variation>VGRILPPVPLTSPREAFR</variation>
    <location>
        <begin position="93"/>
        <end position="110"/>
    </location>
</feature>
<feature type="sequence conflict" description="In Ref. 2; BAB31195." evidence="8" ref="2">
    <original>MW</original>
    <variation>TD</variation>
    <location>
        <begin position="209"/>
        <end position="210"/>
    </location>
</feature>
<feature type="sequence conflict" description="In Ref. 3; BAD32469." evidence="8" ref="3">
    <original>K</original>
    <variation>Q</variation>
    <location>
        <position position="233"/>
    </location>
</feature>
<protein>
    <recommendedName>
        <fullName evidence="8">Alpha-protein kinase 1</fullName>
        <ecNumber evidence="1">2.7.11.1</ecNumber>
    </recommendedName>
</protein>
<keyword id="KW-0966">Cell projection</keyword>
<keyword id="KW-0963">Cytoplasm</keyword>
<keyword id="KW-0206">Cytoskeleton</keyword>
<keyword id="KW-0391">Immunity</keyword>
<keyword id="KW-0399">Innate immunity</keyword>
<keyword id="KW-0418">Kinase</keyword>
<keyword id="KW-1185">Reference proteome</keyword>
<keyword id="KW-0723">Serine/threonine-protein kinase</keyword>
<keyword id="KW-0808">Transferase</keyword>
<reference key="1">
    <citation type="journal article" date="2009" name="PLoS Biol.">
        <title>Lineage-specific biology revealed by a finished genome assembly of the mouse.</title>
        <authorList>
            <person name="Church D.M."/>
            <person name="Goodstadt L."/>
            <person name="Hillier L.W."/>
            <person name="Zody M.C."/>
            <person name="Goldstein S."/>
            <person name="She X."/>
            <person name="Bult C.J."/>
            <person name="Agarwala R."/>
            <person name="Cherry J.L."/>
            <person name="DiCuccio M."/>
            <person name="Hlavina W."/>
            <person name="Kapustin Y."/>
            <person name="Meric P."/>
            <person name="Maglott D."/>
            <person name="Birtle Z."/>
            <person name="Marques A.C."/>
            <person name="Graves T."/>
            <person name="Zhou S."/>
            <person name="Teague B."/>
            <person name="Potamousis K."/>
            <person name="Churas C."/>
            <person name="Place M."/>
            <person name="Herschleb J."/>
            <person name="Runnheim R."/>
            <person name="Forrest D."/>
            <person name="Amos-Landgraf J."/>
            <person name="Schwartz D.C."/>
            <person name="Cheng Z."/>
            <person name="Lindblad-Toh K."/>
            <person name="Eichler E.E."/>
            <person name="Ponting C.P."/>
        </authorList>
    </citation>
    <scope>NUCLEOTIDE SEQUENCE [LARGE SCALE GENOMIC DNA]</scope>
    <source>
        <strain>C57BL/6J</strain>
    </source>
</reference>
<reference key="2">
    <citation type="journal article" date="2005" name="Science">
        <title>The transcriptional landscape of the mammalian genome.</title>
        <authorList>
            <person name="Carninci P."/>
            <person name="Kasukawa T."/>
            <person name="Katayama S."/>
            <person name="Gough J."/>
            <person name="Frith M.C."/>
            <person name="Maeda N."/>
            <person name="Oyama R."/>
            <person name="Ravasi T."/>
            <person name="Lenhard B."/>
            <person name="Wells C."/>
            <person name="Kodzius R."/>
            <person name="Shimokawa K."/>
            <person name="Bajic V.B."/>
            <person name="Brenner S.E."/>
            <person name="Batalov S."/>
            <person name="Forrest A.R."/>
            <person name="Zavolan M."/>
            <person name="Davis M.J."/>
            <person name="Wilming L.G."/>
            <person name="Aidinis V."/>
            <person name="Allen J.E."/>
            <person name="Ambesi-Impiombato A."/>
            <person name="Apweiler R."/>
            <person name="Aturaliya R.N."/>
            <person name="Bailey T.L."/>
            <person name="Bansal M."/>
            <person name="Baxter L."/>
            <person name="Beisel K.W."/>
            <person name="Bersano T."/>
            <person name="Bono H."/>
            <person name="Chalk A.M."/>
            <person name="Chiu K.P."/>
            <person name="Choudhary V."/>
            <person name="Christoffels A."/>
            <person name="Clutterbuck D.R."/>
            <person name="Crowe M.L."/>
            <person name="Dalla E."/>
            <person name="Dalrymple B.P."/>
            <person name="de Bono B."/>
            <person name="Della Gatta G."/>
            <person name="di Bernardo D."/>
            <person name="Down T."/>
            <person name="Engstrom P."/>
            <person name="Fagiolini M."/>
            <person name="Faulkner G."/>
            <person name="Fletcher C.F."/>
            <person name="Fukushima T."/>
            <person name="Furuno M."/>
            <person name="Futaki S."/>
            <person name="Gariboldi M."/>
            <person name="Georgii-Hemming P."/>
            <person name="Gingeras T.R."/>
            <person name="Gojobori T."/>
            <person name="Green R.E."/>
            <person name="Gustincich S."/>
            <person name="Harbers M."/>
            <person name="Hayashi Y."/>
            <person name="Hensch T.K."/>
            <person name="Hirokawa N."/>
            <person name="Hill D."/>
            <person name="Huminiecki L."/>
            <person name="Iacono M."/>
            <person name="Ikeo K."/>
            <person name="Iwama A."/>
            <person name="Ishikawa T."/>
            <person name="Jakt M."/>
            <person name="Kanapin A."/>
            <person name="Katoh M."/>
            <person name="Kawasawa Y."/>
            <person name="Kelso J."/>
            <person name="Kitamura H."/>
            <person name="Kitano H."/>
            <person name="Kollias G."/>
            <person name="Krishnan S.P."/>
            <person name="Kruger A."/>
            <person name="Kummerfeld S.K."/>
            <person name="Kurochkin I.V."/>
            <person name="Lareau L.F."/>
            <person name="Lazarevic D."/>
            <person name="Lipovich L."/>
            <person name="Liu J."/>
            <person name="Liuni S."/>
            <person name="McWilliam S."/>
            <person name="Madan Babu M."/>
            <person name="Madera M."/>
            <person name="Marchionni L."/>
            <person name="Matsuda H."/>
            <person name="Matsuzawa S."/>
            <person name="Miki H."/>
            <person name="Mignone F."/>
            <person name="Miyake S."/>
            <person name="Morris K."/>
            <person name="Mottagui-Tabar S."/>
            <person name="Mulder N."/>
            <person name="Nakano N."/>
            <person name="Nakauchi H."/>
            <person name="Ng P."/>
            <person name="Nilsson R."/>
            <person name="Nishiguchi S."/>
            <person name="Nishikawa S."/>
            <person name="Nori F."/>
            <person name="Ohara O."/>
            <person name="Okazaki Y."/>
            <person name="Orlando V."/>
            <person name="Pang K.C."/>
            <person name="Pavan W.J."/>
            <person name="Pavesi G."/>
            <person name="Pesole G."/>
            <person name="Petrovsky N."/>
            <person name="Piazza S."/>
            <person name="Reed J."/>
            <person name="Reid J.F."/>
            <person name="Ring B.Z."/>
            <person name="Ringwald M."/>
            <person name="Rost B."/>
            <person name="Ruan Y."/>
            <person name="Salzberg S.L."/>
            <person name="Sandelin A."/>
            <person name="Schneider C."/>
            <person name="Schoenbach C."/>
            <person name="Sekiguchi K."/>
            <person name="Semple C.A."/>
            <person name="Seno S."/>
            <person name="Sessa L."/>
            <person name="Sheng Y."/>
            <person name="Shibata Y."/>
            <person name="Shimada H."/>
            <person name="Shimada K."/>
            <person name="Silva D."/>
            <person name="Sinclair B."/>
            <person name="Sperling S."/>
            <person name="Stupka E."/>
            <person name="Sugiura K."/>
            <person name="Sultana R."/>
            <person name="Takenaka Y."/>
            <person name="Taki K."/>
            <person name="Tammoja K."/>
            <person name="Tan S.L."/>
            <person name="Tang S."/>
            <person name="Taylor M.S."/>
            <person name="Tegner J."/>
            <person name="Teichmann S.A."/>
            <person name="Ueda H.R."/>
            <person name="van Nimwegen E."/>
            <person name="Verardo R."/>
            <person name="Wei C.L."/>
            <person name="Yagi K."/>
            <person name="Yamanishi H."/>
            <person name="Zabarovsky E."/>
            <person name="Zhu S."/>
            <person name="Zimmer A."/>
            <person name="Hide W."/>
            <person name="Bult C."/>
            <person name="Grimmond S.M."/>
            <person name="Teasdale R.D."/>
            <person name="Liu E.T."/>
            <person name="Brusic V."/>
            <person name="Quackenbush J."/>
            <person name="Wahlestedt C."/>
            <person name="Mattick J.S."/>
            <person name="Hume D.A."/>
            <person name="Kai C."/>
            <person name="Sasaki D."/>
            <person name="Tomaru Y."/>
            <person name="Fukuda S."/>
            <person name="Kanamori-Katayama M."/>
            <person name="Suzuki M."/>
            <person name="Aoki J."/>
            <person name="Arakawa T."/>
            <person name="Iida J."/>
            <person name="Imamura K."/>
            <person name="Itoh M."/>
            <person name="Kato T."/>
            <person name="Kawaji H."/>
            <person name="Kawagashira N."/>
            <person name="Kawashima T."/>
            <person name="Kojima M."/>
            <person name="Kondo S."/>
            <person name="Konno H."/>
            <person name="Nakano K."/>
            <person name="Ninomiya N."/>
            <person name="Nishio T."/>
            <person name="Okada M."/>
            <person name="Plessy C."/>
            <person name="Shibata K."/>
            <person name="Shiraki T."/>
            <person name="Suzuki S."/>
            <person name="Tagami M."/>
            <person name="Waki K."/>
            <person name="Watahiki A."/>
            <person name="Okamura-Oho Y."/>
            <person name="Suzuki H."/>
            <person name="Kawai J."/>
            <person name="Hayashizaki Y."/>
        </authorList>
    </citation>
    <scope>NUCLEOTIDE SEQUENCE [LARGE SCALE MRNA] OF 1-209</scope>
    <source>
        <strain>C57BL/6J</strain>
        <tissue>Aorta</tissue>
        <tissue>Lung</tissue>
        <tissue>Vein</tissue>
    </source>
</reference>
<reference key="3">
    <citation type="journal article" date="2004" name="DNA Res.">
        <title>Prediction of the coding sequences of mouse homologues of KIAA gene: IV. The complete nucleotide sequences of 500 mouse KIAA-homologous cDNAs identified by screening of terminal sequences of cDNA clones randomly sampled from size-fractionated libraries.</title>
        <authorList>
            <person name="Okazaki N."/>
            <person name="Kikuno R."/>
            <person name="Ohara R."/>
            <person name="Inamoto S."/>
            <person name="Koseki H."/>
            <person name="Hiraoka S."/>
            <person name="Saga Y."/>
            <person name="Seino S."/>
            <person name="Nishimura M."/>
            <person name="Kaisho T."/>
            <person name="Hoshino K."/>
            <person name="Kitamura H."/>
            <person name="Nagase T."/>
            <person name="Ohara O."/>
            <person name="Koga H."/>
        </authorList>
    </citation>
    <scope>NUCLEOTIDE SEQUENCE [LARGE SCALE MRNA] OF 233-1231</scope>
    <source>
        <tissue>Brain</tissue>
    </source>
</reference>
<reference key="4">
    <citation type="journal article" date="2011" name="BMC Neurosci.">
        <title>Motor coordination deficits in Alpk1 mutant mice with the inserted piggyBac transposon.</title>
        <authorList>
            <person name="Chen M."/>
            <person name="Xu R."/>
        </authorList>
    </citation>
    <scope>DISRUPTION PHENOTYPE</scope>
</reference>
<reference key="5">
    <citation type="journal article" date="2018" name="Nature">
        <title>Alpha-kinase 1 is a cytosolic innate immune receptor for bacterial ADP-heptose.</title>
        <authorList>
            <person name="Zhou P."/>
            <person name="She Y."/>
            <person name="Dong N."/>
            <person name="Li P."/>
            <person name="He H."/>
            <person name="Borio A."/>
            <person name="Wu Q."/>
            <person name="Lu S."/>
            <person name="Ding X."/>
            <person name="Cao Y."/>
            <person name="Xu Y."/>
            <person name="Gao W."/>
            <person name="Dong M."/>
            <person name="Ding J."/>
            <person name="Wang D.C."/>
            <person name="Zamyatina A."/>
            <person name="Shao F."/>
        </authorList>
    </citation>
    <scope>FUNCTION</scope>
    <scope>DISRUPTION PHENOTYPE</scope>
</reference>
<reference key="6">
    <citation type="journal article" date="2019" name="Genet. Med.">
        <title>ALPK1 missense pathogenic variant in five families leads to ROSAH syndrome, an ocular multisystem autosomal dominant disorder.</title>
        <authorList>
            <person name="Williams L.B."/>
            <person name="Javed A."/>
            <person name="Sabri A."/>
            <person name="Morgan D.J."/>
            <person name="Huff C.D."/>
            <person name="Grigg J.R."/>
            <person name="Heng X.T."/>
            <person name="Khng A.J."/>
            <person name="Hollink I.H.I.M."/>
            <person name="Morrison M.A."/>
            <person name="Owen L.A."/>
            <person name="Anderson K."/>
            <person name="Kinard K."/>
            <person name="Greenlees R."/>
            <person name="Novacic D."/>
            <person name="Nida Sen H."/>
            <person name="Zein W.M."/>
            <person name="Rodgers G.M."/>
            <person name="Vitale A.T."/>
            <person name="Haider N.B."/>
            <person name="Hillmer A.M."/>
            <person name="Ng P.C."/>
            <person name="Shankar A."/>
            <person name="Cheng A."/>
            <person name="Zheng L."/>
            <person name="Gillies M.C."/>
            <person name="van Slegtenhorst M."/>
            <person name="van Hagen P.M."/>
            <person name="Missotten T.O.A.R."/>
            <person name="Farley G.L."/>
            <person name="Polo M."/>
            <person name="Malatack J."/>
            <person name="Curtin J."/>
            <person name="Martin F."/>
            <person name="Arbuckle S."/>
            <person name="Alexander S.I."/>
            <person name="Chircop M."/>
            <person name="Davila S."/>
            <person name="Digre K.B."/>
            <person name="Jamieson R.V."/>
            <person name="DeAngelis M.M."/>
        </authorList>
    </citation>
    <scope>TISSUE SPECIFICITY</scope>
    <scope>SUBCELLULAR LOCATION</scope>
</reference>
<gene>
    <name evidence="9" type="primary">Alpk1</name>
    <name evidence="7" type="synonym">Kiaa1527</name>
</gene>
<evidence type="ECO:0000250" key="1">
    <source>
        <dbReference type="UniProtKB" id="Q96QP1"/>
    </source>
</evidence>
<evidence type="ECO:0000255" key="2">
    <source>
        <dbReference type="PROSITE-ProRule" id="PRU00501"/>
    </source>
</evidence>
<evidence type="ECO:0000256" key="3">
    <source>
        <dbReference type="SAM" id="MobiDB-lite"/>
    </source>
</evidence>
<evidence type="ECO:0000269" key="4">
    <source>
    </source>
</evidence>
<evidence type="ECO:0000269" key="5">
    <source>
    </source>
</evidence>
<evidence type="ECO:0000269" key="6">
    <source>
    </source>
</evidence>
<evidence type="ECO:0000303" key="7">
    <source>
    </source>
</evidence>
<evidence type="ECO:0000305" key="8"/>
<evidence type="ECO:0000312" key="9">
    <source>
        <dbReference type="MGI" id="MGI:1918731"/>
    </source>
</evidence>
<dbReference type="EC" id="2.7.11.1" evidence="1"/>
<dbReference type="EMBL" id="AC158308">
    <property type="status" value="NOT_ANNOTATED_CDS"/>
    <property type="molecule type" value="Genomic_DNA"/>
</dbReference>
<dbReference type="EMBL" id="AC163391">
    <property type="status" value="NOT_ANNOTATED_CDS"/>
    <property type="molecule type" value="Genomic_DNA"/>
</dbReference>
<dbReference type="EMBL" id="AK018401">
    <property type="protein sequence ID" value="BAB31195.1"/>
    <property type="molecule type" value="mRNA"/>
</dbReference>
<dbReference type="EMBL" id="AK041315">
    <property type="protein sequence ID" value="BAC30902.1"/>
    <property type="molecule type" value="mRNA"/>
</dbReference>
<dbReference type="EMBL" id="AK173191">
    <property type="protein sequence ID" value="BAD32469.1"/>
    <property type="molecule type" value="mRNA"/>
</dbReference>
<dbReference type="CCDS" id="CCDS51067.1"/>
<dbReference type="SMR" id="Q9CXB8"/>
<dbReference type="FunCoup" id="Q9CXB8">
    <property type="interactions" value="162"/>
</dbReference>
<dbReference type="STRING" id="10090.ENSMUSP00000029662"/>
<dbReference type="iPTMnet" id="Q9CXB8"/>
<dbReference type="PhosphoSitePlus" id="Q9CXB8"/>
<dbReference type="PaxDb" id="10090-ENSMUSP00000029662"/>
<dbReference type="ProteomicsDB" id="296176"/>
<dbReference type="AGR" id="MGI:1918731"/>
<dbReference type="MGI" id="MGI:1918731">
    <property type="gene designation" value="Alpk1"/>
</dbReference>
<dbReference type="eggNOG" id="ENOG502QX1X">
    <property type="taxonomic scope" value="Eukaryota"/>
</dbReference>
<dbReference type="InParanoid" id="Q9CXB8"/>
<dbReference type="PhylomeDB" id="Q9CXB8"/>
<dbReference type="Reactome" id="R-MMU-445989">
    <property type="pathway name" value="TAK1-dependent IKK and NF-kappa-B activation"/>
</dbReference>
<dbReference type="Reactome" id="R-MMU-9645460">
    <property type="pathway name" value="Alpha-protein kinase 1 signaling pathway"/>
</dbReference>
<dbReference type="ChiTaRS" id="Alpk1">
    <property type="organism name" value="mouse"/>
</dbReference>
<dbReference type="PRO" id="PR:Q9CXB8"/>
<dbReference type="Proteomes" id="UP000000589">
    <property type="component" value="Unplaced"/>
</dbReference>
<dbReference type="RNAct" id="Q9CXB8">
    <property type="molecule type" value="protein"/>
</dbReference>
<dbReference type="GO" id="GO:0005813">
    <property type="term" value="C:centrosome"/>
    <property type="evidence" value="ECO:0000250"/>
    <property type="project" value="UniProtKB"/>
</dbReference>
<dbReference type="GO" id="GO:0005829">
    <property type="term" value="C:cytosol"/>
    <property type="evidence" value="ECO:0000250"/>
    <property type="project" value="UniProtKB"/>
</dbReference>
<dbReference type="GO" id="GO:0032391">
    <property type="term" value="C:photoreceptor connecting cilium"/>
    <property type="evidence" value="ECO:0000314"/>
    <property type="project" value="UniProtKB"/>
</dbReference>
<dbReference type="GO" id="GO:0000922">
    <property type="term" value="C:spindle pole"/>
    <property type="evidence" value="ECO:0000250"/>
    <property type="project" value="UniProtKB"/>
</dbReference>
<dbReference type="GO" id="GO:0005524">
    <property type="term" value="F:ATP binding"/>
    <property type="evidence" value="ECO:0007669"/>
    <property type="project" value="InterPro"/>
</dbReference>
<dbReference type="GO" id="GO:0048029">
    <property type="term" value="F:monosaccharide binding"/>
    <property type="evidence" value="ECO:0000250"/>
    <property type="project" value="UniProtKB"/>
</dbReference>
<dbReference type="GO" id="GO:0106310">
    <property type="term" value="F:protein serine kinase activity"/>
    <property type="evidence" value="ECO:0007669"/>
    <property type="project" value="RHEA"/>
</dbReference>
<dbReference type="GO" id="GO:0004674">
    <property type="term" value="F:protein serine/threonine kinase activity"/>
    <property type="evidence" value="ECO:0000250"/>
    <property type="project" value="UniProtKB"/>
</dbReference>
<dbReference type="GO" id="GO:0060271">
    <property type="term" value="P:cilium assembly"/>
    <property type="evidence" value="ECO:0000250"/>
    <property type="project" value="UniProtKB"/>
</dbReference>
<dbReference type="GO" id="GO:0002753">
    <property type="term" value="P:cytoplasmic pattern recognition receptor signaling pathway"/>
    <property type="evidence" value="ECO:0000315"/>
    <property type="project" value="UniProtKB"/>
</dbReference>
<dbReference type="GO" id="GO:0045087">
    <property type="term" value="P:innate immune response"/>
    <property type="evidence" value="ECO:0000315"/>
    <property type="project" value="UniProtKB"/>
</dbReference>
<dbReference type="GO" id="GO:0043123">
    <property type="term" value="P:positive regulation of canonical NF-kappaB signal transduction"/>
    <property type="evidence" value="ECO:0000250"/>
    <property type="project" value="UniProtKB"/>
</dbReference>
<dbReference type="GO" id="GO:0009617">
    <property type="term" value="P:response to bacterium"/>
    <property type="evidence" value="ECO:0000270"/>
    <property type="project" value="MGI"/>
</dbReference>
<dbReference type="CDD" id="cd16969">
    <property type="entry name" value="Alpha_kinase_ALPK1"/>
    <property type="match status" value="1"/>
</dbReference>
<dbReference type="FunFam" id="3.30.200.20:FF:001811">
    <property type="match status" value="1"/>
</dbReference>
<dbReference type="Gene3D" id="3.20.200.10">
    <property type="entry name" value="MHCK/EF2 kinase"/>
    <property type="match status" value="1"/>
</dbReference>
<dbReference type="Gene3D" id="3.30.200.20">
    <property type="entry name" value="Phosphorylase Kinase, domain 1"/>
    <property type="match status" value="1"/>
</dbReference>
<dbReference type="InterPro" id="IPR004166">
    <property type="entry name" value="a-kinase_dom"/>
</dbReference>
<dbReference type="InterPro" id="IPR043529">
    <property type="entry name" value="ALPK1"/>
</dbReference>
<dbReference type="InterPro" id="IPR011009">
    <property type="entry name" value="Kinase-like_dom_sf"/>
</dbReference>
<dbReference type="PANTHER" id="PTHR46747">
    <property type="entry name" value="ALPHA-PROTEIN KINASE 1"/>
    <property type="match status" value="1"/>
</dbReference>
<dbReference type="PANTHER" id="PTHR46747:SF1">
    <property type="entry name" value="ALPHA-PROTEIN KINASE 1"/>
    <property type="match status" value="1"/>
</dbReference>
<dbReference type="Pfam" id="PF02816">
    <property type="entry name" value="Alpha_kinase"/>
    <property type="match status" value="1"/>
</dbReference>
<dbReference type="SMART" id="SM00811">
    <property type="entry name" value="Alpha_kinase"/>
    <property type="match status" value="1"/>
</dbReference>
<dbReference type="SUPFAM" id="SSF56112">
    <property type="entry name" value="Protein kinase-like (PK-like)"/>
    <property type="match status" value="1"/>
</dbReference>
<dbReference type="PROSITE" id="PS51158">
    <property type="entry name" value="ALPHA_KINASE"/>
    <property type="match status" value="1"/>
</dbReference>
<name>ALPK1_MOUSE</name>
<comment type="function">
    <text evidence="1 5">Serine/threonine-protein kinase that detects bacterial pathogen-associated molecular pattern metabolites (PAMPs) and initiates an innate immune response, a critical step for pathogen elimination and engagement of adaptive immunity (By similarity). Specifically recognizes and binds ADP-D-glycero-beta-D-manno-heptose (ADP-Heptose), a potent PAMP present in all Gram-negative and some Gram-positive bacteria (PubMed:30111836). ADP-Heptose-binding stimulates its kinase activity to phosphorylate and activate TIFA, triggering pro-inflammatory NF-kappa-B signaling (By similarity). May be involved in monosodium urate monohydrate (MSU)-induced inflammation by mediating phosphorylation of unconventional myosin MYO9A (By similarity). May also play a role in apical protein transport by mediating phosphorylation of unconventional myosin MYO1A (By similarity). May play a role in ciliogenesis (By similarity).</text>
</comment>
<comment type="catalytic activity">
    <reaction evidence="1">
        <text>L-seryl-[protein] + ATP = O-phospho-L-seryl-[protein] + ADP + H(+)</text>
        <dbReference type="Rhea" id="RHEA:17989"/>
        <dbReference type="Rhea" id="RHEA-COMP:9863"/>
        <dbReference type="Rhea" id="RHEA-COMP:11604"/>
        <dbReference type="ChEBI" id="CHEBI:15378"/>
        <dbReference type="ChEBI" id="CHEBI:29999"/>
        <dbReference type="ChEBI" id="CHEBI:30616"/>
        <dbReference type="ChEBI" id="CHEBI:83421"/>
        <dbReference type="ChEBI" id="CHEBI:456216"/>
        <dbReference type="EC" id="2.7.11.1"/>
    </reaction>
</comment>
<comment type="catalytic activity">
    <reaction evidence="1">
        <text>L-threonyl-[protein] + ATP = O-phospho-L-threonyl-[protein] + ADP + H(+)</text>
        <dbReference type="Rhea" id="RHEA:46608"/>
        <dbReference type="Rhea" id="RHEA-COMP:11060"/>
        <dbReference type="Rhea" id="RHEA-COMP:11605"/>
        <dbReference type="ChEBI" id="CHEBI:15378"/>
        <dbReference type="ChEBI" id="CHEBI:30013"/>
        <dbReference type="ChEBI" id="CHEBI:30616"/>
        <dbReference type="ChEBI" id="CHEBI:61977"/>
        <dbReference type="ChEBI" id="CHEBI:456216"/>
        <dbReference type="EC" id="2.7.11.1"/>
    </reaction>
</comment>
<comment type="activity regulation">
    <text evidence="1">Serine/threonine-protein kinase activity is stimulated upon ADP-D-glycero-beta-D-manno-heptose (ADP-Heptose)-binding.</text>
</comment>
<comment type="subcellular location">
    <subcellularLocation>
        <location evidence="1">Cytoplasm</location>
        <location evidence="1">Cytosol</location>
    </subcellularLocation>
    <subcellularLocation>
        <location evidence="1">Cytoplasm</location>
        <location evidence="1">Cytoskeleton</location>
        <location evidence="1">Spindle pole</location>
    </subcellularLocation>
    <subcellularLocation>
        <location evidence="1">Cytoplasm</location>
        <location evidence="1">Cytoskeleton</location>
        <location evidence="1">Microtubule organizing center</location>
        <location evidence="1">Centrosome</location>
    </subcellularLocation>
    <subcellularLocation>
        <location evidence="6">Cell projection</location>
        <location evidence="6">Cilium</location>
    </subcellularLocation>
    <text evidence="6">Localized to the basal body region of the photoreceptor cilium and the region of the adjacent centriole.</text>
</comment>
<comment type="tissue specificity">
    <text evidence="6">Widely expressed (PubMed:30967659). Expressed in the retina and in sweat glands, especially in the myoepithelial cells (PubMed:30967659).</text>
</comment>
<comment type="disruption phenotype">
    <text evidence="4 5">Mice show defects in motor coordination (PubMed:21208416). The cerebellar architecture, Purkinje cell morphology and electrophysiology of the Purkinje cells is apparently not affected (PubMed:21208416). Mice display impaired ability to initiate an innate immune response in response to ADP-D-glycero-beta-D-manno-heptose (ADP-Heptose): mice injected with ADP-Heptose show no increase in cytokine production (PubMed:30111836).</text>
</comment>
<comment type="similarity">
    <text evidence="8">Belongs to the protein kinase superfamily. Alpha-type protein kinase family. ALPK subfamily.</text>
</comment>